<organism>
    <name type="scientific">Phytoplasma australiense</name>
    <dbReference type="NCBI Taxonomy" id="59748"/>
    <lineage>
        <taxon>Bacteria</taxon>
        <taxon>Bacillati</taxon>
        <taxon>Mycoplasmatota</taxon>
        <taxon>Mollicutes</taxon>
        <taxon>Acholeplasmatales</taxon>
        <taxon>Acholeplasmataceae</taxon>
        <taxon>Candidatus Phytoplasma</taxon>
        <taxon>16SrXII (Stolbur group)</taxon>
    </lineage>
</organism>
<keyword id="KW-1185">Reference proteome</keyword>
<keyword id="KW-0687">Ribonucleoprotein</keyword>
<keyword id="KW-0689">Ribosomal protein</keyword>
<keyword id="KW-0694">RNA-binding</keyword>
<keyword id="KW-0699">rRNA-binding</keyword>
<comment type="function">
    <text evidence="1">One of the early assembly proteins it binds 23S rRNA. One of the proteins that surrounds the polypeptide exit tunnel on the outside of the ribosome. Forms the main docking site for trigger factor binding to the ribosome.</text>
</comment>
<comment type="subunit">
    <text evidence="1">Part of the 50S ribosomal subunit. Contacts protein L29, and trigger factor when it is bound to the ribosome.</text>
</comment>
<comment type="similarity">
    <text evidence="1">Belongs to the universal ribosomal protein uL23 family.</text>
</comment>
<proteinExistence type="inferred from homology"/>
<reference key="1">
    <citation type="journal article" date="2008" name="J. Bacteriol.">
        <title>Comparative genome analysis of 'Candidatus Phytoplasma australiense' (subgroup tuf-Australia I; rp-A) and 'Ca. Phytoplasma asteris' strains OY-M and AY-WB.</title>
        <authorList>
            <person name="Tran-Nguyen L.T."/>
            <person name="Kube M."/>
            <person name="Schneider B."/>
            <person name="Reinhardt R."/>
            <person name="Gibb K.S."/>
        </authorList>
    </citation>
    <scope>NUCLEOTIDE SEQUENCE [LARGE SCALE GENOMIC DNA]</scope>
</reference>
<name>RL23_PHYAS</name>
<dbReference type="EMBL" id="AM422018">
    <property type="protein sequence ID" value="CAM11919.1"/>
    <property type="molecule type" value="Genomic_DNA"/>
</dbReference>
<dbReference type="SMR" id="B1VAE6"/>
<dbReference type="STRING" id="59748.PA0585"/>
<dbReference type="KEGG" id="pal:PA0585"/>
<dbReference type="eggNOG" id="COG0089">
    <property type="taxonomic scope" value="Bacteria"/>
</dbReference>
<dbReference type="Proteomes" id="UP000008323">
    <property type="component" value="Chromosome"/>
</dbReference>
<dbReference type="GO" id="GO:1990904">
    <property type="term" value="C:ribonucleoprotein complex"/>
    <property type="evidence" value="ECO:0007669"/>
    <property type="project" value="UniProtKB-KW"/>
</dbReference>
<dbReference type="GO" id="GO:0005840">
    <property type="term" value="C:ribosome"/>
    <property type="evidence" value="ECO:0007669"/>
    <property type="project" value="UniProtKB-KW"/>
</dbReference>
<dbReference type="GO" id="GO:0019843">
    <property type="term" value="F:rRNA binding"/>
    <property type="evidence" value="ECO:0007669"/>
    <property type="project" value="UniProtKB-UniRule"/>
</dbReference>
<dbReference type="GO" id="GO:0003735">
    <property type="term" value="F:structural constituent of ribosome"/>
    <property type="evidence" value="ECO:0007669"/>
    <property type="project" value="InterPro"/>
</dbReference>
<dbReference type="GO" id="GO:0006412">
    <property type="term" value="P:translation"/>
    <property type="evidence" value="ECO:0007669"/>
    <property type="project" value="UniProtKB-UniRule"/>
</dbReference>
<dbReference type="Gene3D" id="3.30.70.330">
    <property type="match status" value="1"/>
</dbReference>
<dbReference type="HAMAP" id="MF_01369_B">
    <property type="entry name" value="Ribosomal_uL23_B"/>
    <property type="match status" value="1"/>
</dbReference>
<dbReference type="InterPro" id="IPR012677">
    <property type="entry name" value="Nucleotide-bd_a/b_plait_sf"/>
</dbReference>
<dbReference type="InterPro" id="IPR013025">
    <property type="entry name" value="Ribosomal_uL23-like"/>
</dbReference>
<dbReference type="InterPro" id="IPR012678">
    <property type="entry name" value="Ribosomal_uL23/eL15/eS24_sf"/>
</dbReference>
<dbReference type="NCBIfam" id="NF004363">
    <property type="entry name" value="PRK05738.2-4"/>
    <property type="match status" value="1"/>
</dbReference>
<dbReference type="PANTHER" id="PTHR11620">
    <property type="entry name" value="60S RIBOSOMAL PROTEIN L23A"/>
    <property type="match status" value="1"/>
</dbReference>
<dbReference type="Pfam" id="PF00276">
    <property type="entry name" value="Ribosomal_L23"/>
    <property type="match status" value="1"/>
</dbReference>
<dbReference type="SUPFAM" id="SSF54189">
    <property type="entry name" value="Ribosomal proteins S24e, L23 and L15e"/>
    <property type="match status" value="1"/>
</dbReference>
<sequence>MKYYDLIKSPIVTEVTNKLIERQNKYTFKVAKTANKIEIKKAFEHIFKVKVTVNTSNVLPRFKRKGKYAGYTAGYKKAVVKVTSGEKIAILAND</sequence>
<evidence type="ECO:0000255" key="1">
    <source>
        <dbReference type="HAMAP-Rule" id="MF_01369"/>
    </source>
</evidence>
<evidence type="ECO:0000305" key="2"/>
<protein>
    <recommendedName>
        <fullName evidence="1">Large ribosomal subunit protein uL23</fullName>
    </recommendedName>
    <alternativeName>
        <fullName evidence="2">50S ribosomal protein L23</fullName>
    </alternativeName>
</protein>
<feature type="chain" id="PRO_1000144596" description="Large ribosomal subunit protein uL23">
    <location>
        <begin position="1"/>
        <end position="94"/>
    </location>
</feature>
<gene>
    <name evidence="1" type="primary">rplW</name>
    <name type="ordered locus">PA0585</name>
</gene>
<accession>B1VAE6</accession>